<keyword id="KW-0004">4Fe-4S</keyword>
<keyword id="KW-0903">Direct protein sequencing</keyword>
<keyword id="KW-0235">DNA replication</keyword>
<keyword id="KW-0238">DNA-binding</keyword>
<keyword id="KW-0408">Iron</keyword>
<keyword id="KW-0411">Iron-sulfur</keyword>
<keyword id="KW-0479">Metal-binding</keyword>
<keyword id="KW-0597">Phosphoprotein</keyword>
<keyword id="KW-0639">Primosome</keyword>
<keyword id="KW-1185">Reference proteome</keyword>
<proteinExistence type="evidence at protein level"/>
<organism>
    <name type="scientific">Mus musculus</name>
    <name type="common">Mouse</name>
    <dbReference type="NCBI Taxonomy" id="10090"/>
    <lineage>
        <taxon>Eukaryota</taxon>
        <taxon>Metazoa</taxon>
        <taxon>Chordata</taxon>
        <taxon>Craniata</taxon>
        <taxon>Vertebrata</taxon>
        <taxon>Euteleostomi</taxon>
        <taxon>Mammalia</taxon>
        <taxon>Eutheria</taxon>
        <taxon>Euarchontoglires</taxon>
        <taxon>Glires</taxon>
        <taxon>Rodentia</taxon>
        <taxon>Myomorpha</taxon>
        <taxon>Muroidea</taxon>
        <taxon>Muridae</taxon>
        <taxon>Murinae</taxon>
        <taxon>Mus</taxon>
        <taxon>Mus</taxon>
    </lineage>
</organism>
<gene>
    <name type="primary">Prim2</name>
</gene>
<sequence length="505" mass="58408">MQFSGRIRKKLRLAGDQRNASYPHSLQFYLQPPTENISLTEFENLAFDRVKLLKAIENLGVSYVKGTEQYQSKLEAEIRKLKFSYRENLEDEYEPRRRDHISHFILRLAYCQSEDLRRWFIQQEMDLLRFRFSILPKDKVQSFLKDSHLHFEAISDEEKTLREQDIMASSPSLSGIKLESESVYKVPFADALDLFRGRKVYLEDGFAYVPLKDIVAIILNEFRATLSKALALTARSLPAVQSDERLQPLLNHLSHSYTGQDYSTQKNTGKISLDQIDSLSTKSFPPCMRQLHKALRENHHLRHGGRMQYGLFLKGIGLTLEQALQFWKQEFIRGKMDPDKFDKGYSYNIRHSFGKEGKRTDYTPFSCMKIILTNPPGQGDYHGCPFRHSDAELLKQKMQSYKIPASGISQILDLVKGNHYQVACQKYFEMTHNVDDCGFSLNHPNQFFFESQRILTGGKDIKKEISQPETPQHKPSTQKTRDAASALASLDSSLEMDLEGLEEYF</sequence>
<accession>P33610</accession>
<accession>Q3U4Z3</accession>
<feature type="chain" id="PRO_0000046769" description="DNA primase large subunit">
    <location>
        <begin position="1"/>
        <end position="505"/>
    </location>
</feature>
<feature type="region of interest" description="Interdomain linker" evidence="2">
    <location>
        <begin position="253"/>
        <end position="270"/>
    </location>
</feature>
<feature type="region of interest" description="Interacts with PRIM1" evidence="2">
    <location>
        <begin position="266"/>
        <end position="503"/>
    </location>
</feature>
<feature type="region of interest" description="RNA:DNA duplex binding" evidence="2">
    <location>
        <begin position="300"/>
        <end position="442"/>
    </location>
</feature>
<feature type="region of interest" description="Disordered" evidence="3">
    <location>
        <begin position="463"/>
        <end position="486"/>
    </location>
</feature>
<feature type="compositionally biased region" description="Polar residues" evidence="3">
    <location>
        <begin position="467"/>
        <end position="478"/>
    </location>
</feature>
<feature type="binding site" evidence="2">
    <location>
        <position position="287"/>
    </location>
    <ligand>
        <name>[4Fe-4S] cluster</name>
        <dbReference type="ChEBI" id="CHEBI:49883"/>
    </ligand>
</feature>
<feature type="binding site" evidence="2">
    <location>
        <position position="367"/>
    </location>
    <ligand>
        <name>[4Fe-4S] cluster</name>
        <dbReference type="ChEBI" id="CHEBI:49883"/>
    </ligand>
</feature>
<feature type="binding site" evidence="2">
    <location>
        <position position="384"/>
    </location>
    <ligand>
        <name>[4Fe-4S] cluster</name>
        <dbReference type="ChEBI" id="CHEBI:49883"/>
    </ligand>
</feature>
<feature type="binding site" evidence="2">
    <location>
        <position position="424"/>
    </location>
    <ligand>
        <name>[4Fe-4S] cluster</name>
        <dbReference type="ChEBI" id="CHEBI:49883"/>
    </ligand>
</feature>
<feature type="modified residue" description="Phosphothreonine" evidence="2">
    <location>
        <position position="470"/>
    </location>
</feature>
<feature type="sequence conflict" description="In Ref. 2; BAA04203." evidence="6" ref="2">
    <original>A</original>
    <variation>G</variation>
    <location>
        <position position="109"/>
    </location>
</feature>
<dbReference type="EMBL" id="D13545">
    <property type="protein sequence ID" value="BAA02745.1"/>
    <property type="molecule type" value="mRNA"/>
</dbReference>
<dbReference type="EMBL" id="D17385">
    <property type="protein sequence ID" value="BAA04203.1"/>
    <property type="molecule type" value="mRNA"/>
</dbReference>
<dbReference type="EMBL" id="AK076095">
    <property type="protein sequence ID" value="BAC36179.1"/>
    <property type="molecule type" value="mRNA"/>
</dbReference>
<dbReference type="EMBL" id="AK077760">
    <property type="protein sequence ID" value="BAC36996.1"/>
    <property type="molecule type" value="mRNA"/>
</dbReference>
<dbReference type="EMBL" id="AK153970">
    <property type="protein sequence ID" value="BAE32287.1"/>
    <property type="molecule type" value="mRNA"/>
</dbReference>
<dbReference type="EMBL" id="BC019500">
    <property type="protein sequence ID" value="AAH19500.1"/>
    <property type="molecule type" value="mRNA"/>
</dbReference>
<dbReference type="CCDS" id="CCDS14862.1"/>
<dbReference type="PIR" id="C46642">
    <property type="entry name" value="C46642"/>
</dbReference>
<dbReference type="RefSeq" id="NP_032948.1">
    <property type="nucleotide sequence ID" value="NM_008922.3"/>
</dbReference>
<dbReference type="SMR" id="P33610"/>
<dbReference type="BioGRID" id="202362">
    <property type="interactions" value="9"/>
</dbReference>
<dbReference type="ComplexPortal" id="CPX-2088">
    <property type="entry name" value="DNA polymerase alpha:primase complex"/>
</dbReference>
<dbReference type="CORUM" id="P33610"/>
<dbReference type="FunCoup" id="P33610">
    <property type="interactions" value="1414"/>
</dbReference>
<dbReference type="IntAct" id="P33610">
    <property type="interactions" value="7"/>
</dbReference>
<dbReference type="MINT" id="P33610"/>
<dbReference type="STRING" id="10090.ENSMUSP00000027312"/>
<dbReference type="iPTMnet" id="P33610"/>
<dbReference type="PhosphoSitePlus" id="P33610"/>
<dbReference type="jPOST" id="P33610"/>
<dbReference type="PaxDb" id="10090-ENSMUSP00000027312"/>
<dbReference type="PeptideAtlas" id="P33610"/>
<dbReference type="ProteomicsDB" id="291592"/>
<dbReference type="Pumba" id="P33610"/>
<dbReference type="Antibodypedia" id="31147">
    <property type="antibodies" value="157 antibodies from 26 providers"/>
</dbReference>
<dbReference type="DNASU" id="19076"/>
<dbReference type="Ensembl" id="ENSMUST00000027312.11">
    <property type="protein sequence ID" value="ENSMUSP00000027312.10"/>
    <property type="gene ID" value="ENSMUSG00000026134.12"/>
</dbReference>
<dbReference type="GeneID" id="19076"/>
<dbReference type="KEGG" id="mmu:19076"/>
<dbReference type="UCSC" id="uc007anq.2">
    <property type="organism name" value="mouse"/>
</dbReference>
<dbReference type="AGR" id="MGI:97758"/>
<dbReference type="CTD" id="5558"/>
<dbReference type="MGI" id="MGI:97758">
    <property type="gene designation" value="Prim2"/>
</dbReference>
<dbReference type="VEuPathDB" id="HostDB:ENSMUSG00000026134"/>
<dbReference type="eggNOG" id="KOG2267">
    <property type="taxonomic scope" value="Eukaryota"/>
</dbReference>
<dbReference type="GeneTree" id="ENSGT00390000009790"/>
<dbReference type="HOGENOM" id="CLU_026253_2_0_1"/>
<dbReference type="InParanoid" id="P33610"/>
<dbReference type="OMA" id="RINYKPW"/>
<dbReference type="OrthoDB" id="421393at2759"/>
<dbReference type="PhylomeDB" id="P33610"/>
<dbReference type="TreeFam" id="TF105893"/>
<dbReference type="Reactome" id="R-MMU-113501">
    <property type="pathway name" value="Inhibition of replication initiation of damaged DNA by RB1/E2F1"/>
</dbReference>
<dbReference type="Reactome" id="R-MMU-174411">
    <property type="pathway name" value="Polymerase switching on the C-strand of the telomere"/>
</dbReference>
<dbReference type="Reactome" id="R-MMU-174430">
    <property type="pathway name" value="Telomere C-strand synthesis initiation"/>
</dbReference>
<dbReference type="Reactome" id="R-MMU-68952">
    <property type="pathway name" value="DNA replication initiation"/>
</dbReference>
<dbReference type="Reactome" id="R-MMU-68962">
    <property type="pathway name" value="Activation of the pre-replicative complex"/>
</dbReference>
<dbReference type="Reactome" id="R-MMU-69091">
    <property type="pathway name" value="Polymerase switching"/>
</dbReference>
<dbReference type="Reactome" id="R-MMU-69166">
    <property type="pathway name" value="Removal of the Flap Intermediate"/>
</dbReference>
<dbReference type="Reactome" id="R-MMU-69183">
    <property type="pathway name" value="Processive synthesis on the lagging strand"/>
</dbReference>
<dbReference type="BioGRID-ORCS" id="19076">
    <property type="hits" value="27 hits in 79 CRISPR screens"/>
</dbReference>
<dbReference type="ChiTaRS" id="Prim2">
    <property type="organism name" value="mouse"/>
</dbReference>
<dbReference type="PRO" id="PR:P33610"/>
<dbReference type="Proteomes" id="UP000000589">
    <property type="component" value="Chromosome 1"/>
</dbReference>
<dbReference type="RNAct" id="P33610">
    <property type="molecule type" value="protein"/>
</dbReference>
<dbReference type="Bgee" id="ENSMUSG00000026134">
    <property type="expression patterns" value="Expressed in fetal liver hematopoietic progenitor cell and 269 other cell types or tissues"/>
</dbReference>
<dbReference type="GO" id="GO:0005658">
    <property type="term" value="C:alpha DNA polymerase:primase complex"/>
    <property type="evidence" value="ECO:0000314"/>
    <property type="project" value="UniProtKB"/>
</dbReference>
<dbReference type="GO" id="GO:0051539">
    <property type="term" value="F:4 iron, 4 sulfur cluster binding"/>
    <property type="evidence" value="ECO:0000250"/>
    <property type="project" value="UniProtKB"/>
</dbReference>
<dbReference type="GO" id="GO:0003677">
    <property type="term" value="F:DNA binding"/>
    <property type="evidence" value="ECO:0007669"/>
    <property type="project" value="UniProtKB-KW"/>
</dbReference>
<dbReference type="GO" id="GO:0003899">
    <property type="term" value="F:DNA-directed RNA polymerase activity"/>
    <property type="evidence" value="ECO:0007669"/>
    <property type="project" value="Ensembl"/>
</dbReference>
<dbReference type="GO" id="GO:0071667">
    <property type="term" value="F:DNA/RNA hybrid binding"/>
    <property type="evidence" value="ECO:0000250"/>
    <property type="project" value="UniProtKB"/>
</dbReference>
<dbReference type="GO" id="GO:0046872">
    <property type="term" value="F:metal ion binding"/>
    <property type="evidence" value="ECO:0007669"/>
    <property type="project" value="UniProtKB-KW"/>
</dbReference>
<dbReference type="GO" id="GO:0006270">
    <property type="term" value="P:DNA replication initiation"/>
    <property type="evidence" value="ECO:0000314"/>
    <property type="project" value="ComplexPortal"/>
</dbReference>
<dbReference type="GO" id="GO:0006269">
    <property type="term" value="P:DNA replication, synthesis of primer"/>
    <property type="evidence" value="ECO:0000314"/>
    <property type="project" value="UniProtKB"/>
</dbReference>
<dbReference type="CDD" id="cd07322">
    <property type="entry name" value="PriL_PriS_Eukaryotic"/>
    <property type="match status" value="1"/>
</dbReference>
<dbReference type="FunFam" id="1.20.930.80:FF:000001">
    <property type="entry name" value="DNA primase large subunit"/>
    <property type="match status" value="1"/>
</dbReference>
<dbReference type="Gene3D" id="1.20.930.80">
    <property type="match status" value="1"/>
</dbReference>
<dbReference type="InterPro" id="IPR016558">
    <property type="entry name" value="DNA_primase_lsu_euk"/>
</dbReference>
<dbReference type="InterPro" id="IPR007238">
    <property type="entry name" value="DNA_primase_lsu_euk/arc"/>
</dbReference>
<dbReference type="PANTHER" id="PTHR10537">
    <property type="entry name" value="DNA PRIMASE LARGE SUBUNIT"/>
    <property type="match status" value="1"/>
</dbReference>
<dbReference type="PANTHER" id="PTHR10537:SF3">
    <property type="entry name" value="DNA PRIMASE LARGE SUBUNIT"/>
    <property type="match status" value="1"/>
</dbReference>
<dbReference type="Pfam" id="PF04104">
    <property type="entry name" value="DNA_primase_lrg"/>
    <property type="match status" value="1"/>
</dbReference>
<dbReference type="PIRSF" id="PIRSF009449">
    <property type="entry name" value="DNA_primase_large_subunit"/>
    <property type="match status" value="1"/>
</dbReference>
<name>PRI2_MOUSE</name>
<comment type="function">
    <text evidence="1 2 4 5">Regulatory subunit of the DNA primase complex and component of the DNA polymerase alpha complex (also known as the alpha DNA polymerase-primase complex) which play an essential role in the initiation of DNA synthesis (PubMed:8026492, PubMed:8253737). During the S phase of the cell cycle, the DNA polymerase alpha complex (composed of a catalytic subunit POLA1, an accessory subunit POLA2 and two primase subunits, the catalytic subunit PRIM1 and the regulatory subunit PRIM2) is recruited to DNA at the replicative forks via direct interactions with MCM10 and WDHD1 (By similarity). The primase subunit of the polymerase alpha complex initiates DNA synthesis by oligomerising short RNA primers on both leading and lagging strands (PubMed:8253737). These primers are initially extended by the polymerase alpha catalytic subunit and subsequently transferred to polymerase delta and polymerase epsilon for processive synthesis on the lagging and leading strand, respectively (By similarity). In the primase complex, both subunits are necessary for the initial di-nucleotide formation, but the extension of the primer depends only on the catalytic subunit (PubMed:8253737). Binds RNA:DNA duplex and coordinates the catalytic activities of PRIM1 and POLA2 during primase-to-polymerase switch.</text>
</comment>
<comment type="cofactor">
    <cofactor evidence="2">
        <name>[4Fe-4S] cluster</name>
        <dbReference type="ChEBI" id="CHEBI:49883"/>
    </cofactor>
    <text evidence="2">Binds 1 [4Fe-4S] cluster.</text>
</comment>
<comment type="subunit">
    <text evidence="2 4 5">Heterodimer of a catalytic subunit PRIM1 and a regulatory subunit PRIM2, also known as the DNA primase complex (PubMed:8026492, PubMed:8253737). Interacts via (C-terminus) with PRIM1 (By similarity). Component of the alpha DNA polymerase complex (also known as the alpha DNA polymerase-primase complex) consisting of four subunits: the catalytic subunit POLA1, the regulatory subunit POLA2, and the primase complex subunits PRIM1 and PRIM2 respectively (PubMed:8253737). Within the complex, POLA1 directly interacts with PRIM2 (PubMed:8026492).</text>
</comment>
<comment type="domain">
    <text evidence="2">The RNA:DNA duplex-binding domain interacts with the template phosphates at positions -2, -1, 1, and 2 positioning its bases -1, 1, and 2 for duplex formation. Interacts only with the beta- and gamma-phosphates of triphosphate moiety of initiating NTP of the primer. The side chain of His-303 mimics a RNA base that would be paired with the template nucleotide at position -1 via a hydrogen bond, thereby facilitating the stacking of the initiating NTP. In the initiating primosome a 'mini RNA:DNA' duplex is formed comprising three template nucleotides at positions -1, 1, and 2 on one strand and His-303, initiating NTP, and incoming NTP on the other strand.</text>
</comment>
<comment type="domain">
    <text evidence="2">The interdomain linker provides flexibility in movement relative to primosome platform composed of PRIM1, the N-terminus of PRIM2, the C-terminus of POLA1 and POLA2. Together with POLA1 interdomain linker, allows for large-scale conformational changes of primosome and coordinated autoregulation of catalytic centers of PRIM1 and POLA1. It is proposed to move the C-terminus of PRIM2 close to PRIM1 during initiation, then move it away with the 5'-end of the nascent primer during elongation. The steric hindrance between the N- and C-terminus of PRIM2 as the RNA primer is elongated limits its length to 9 nucleotides. Ultimately a large rotation of the C-terminus of PRIM2 transfers the primer to POLA1 active site for DNA synthesis.</text>
</comment>
<comment type="similarity">
    <text evidence="6">Belongs to the eukaryotic-type primase large subunit family.</text>
</comment>
<evidence type="ECO:0000250" key="1">
    <source>
        <dbReference type="UniProtKB" id="P09884"/>
    </source>
</evidence>
<evidence type="ECO:0000250" key="2">
    <source>
        <dbReference type="UniProtKB" id="P49643"/>
    </source>
</evidence>
<evidence type="ECO:0000256" key="3">
    <source>
        <dbReference type="SAM" id="MobiDB-lite"/>
    </source>
</evidence>
<evidence type="ECO:0000269" key="4">
    <source>
    </source>
</evidence>
<evidence type="ECO:0000269" key="5">
    <source>
    </source>
</evidence>
<evidence type="ECO:0000305" key="6"/>
<reference key="1">
    <citation type="journal article" date="1993" name="J. Biol. Chem.">
        <title>Molecular cloning of the cDNAs for the four subunits of mouse DNA polymerase alpha-primase complex and their gene expression during cell proliferation and the cell cycle.</title>
        <authorList>
            <person name="Miyazawa H."/>
            <person name="Izumi M."/>
            <person name="Tada S."/>
            <person name="Takada R."/>
            <person name="Masutani M."/>
            <person name="Ui M."/>
            <person name="Hanaoka F."/>
        </authorList>
    </citation>
    <scope>NUCLEOTIDE SEQUENCE [MRNA]</scope>
    <scope>PROTEIN SEQUENCE OF 30-48; 186-212 AND 403-416</scope>
</reference>
<reference key="2">
    <citation type="journal article" date="1994" name="Eur. J. Biochem.">
        <title>DNA replication in vitro by recombinant DNA-polymerase-alpha-primase.</title>
        <authorList>
            <person name="Stadlbauer F."/>
            <person name="Brueckner A."/>
            <person name="Rehfuess C."/>
            <person name="Eckerskorn C."/>
            <person name="Lottspeich F."/>
            <person name="Foerster V."/>
            <person name="Tseng B.Y."/>
            <person name="Nasheuer H.-P."/>
        </authorList>
    </citation>
    <scope>NUCLEOTIDE SEQUENCE [MRNA]</scope>
    <scope>FUNCTION</scope>
    <scope>INTERACTION WITH PRIM1</scope>
    <scope>IDENTIFICATION IN THE DNA PRIMASE COMPLEX</scope>
</reference>
<reference key="3">
    <citation type="journal article" date="2005" name="Science">
        <title>The transcriptional landscape of the mammalian genome.</title>
        <authorList>
            <person name="Carninci P."/>
            <person name="Kasukawa T."/>
            <person name="Katayama S."/>
            <person name="Gough J."/>
            <person name="Frith M.C."/>
            <person name="Maeda N."/>
            <person name="Oyama R."/>
            <person name="Ravasi T."/>
            <person name="Lenhard B."/>
            <person name="Wells C."/>
            <person name="Kodzius R."/>
            <person name="Shimokawa K."/>
            <person name="Bajic V.B."/>
            <person name="Brenner S.E."/>
            <person name="Batalov S."/>
            <person name="Forrest A.R."/>
            <person name="Zavolan M."/>
            <person name="Davis M.J."/>
            <person name="Wilming L.G."/>
            <person name="Aidinis V."/>
            <person name="Allen J.E."/>
            <person name="Ambesi-Impiombato A."/>
            <person name="Apweiler R."/>
            <person name="Aturaliya R.N."/>
            <person name="Bailey T.L."/>
            <person name="Bansal M."/>
            <person name="Baxter L."/>
            <person name="Beisel K.W."/>
            <person name="Bersano T."/>
            <person name="Bono H."/>
            <person name="Chalk A.M."/>
            <person name="Chiu K.P."/>
            <person name="Choudhary V."/>
            <person name="Christoffels A."/>
            <person name="Clutterbuck D.R."/>
            <person name="Crowe M.L."/>
            <person name="Dalla E."/>
            <person name="Dalrymple B.P."/>
            <person name="de Bono B."/>
            <person name="Della Gatta G."/>
            <person name="di Bernardo D."/>
            <person name="Down T."/>
            <person name="Engstrom P."/>
            <person name="Fagiolini M."/>
            <person name="Faulkner G."/>
            <person name="Fletcher C.F."/>
            <person name="Fukushima T."/>
            <person name="Furuno M."/>
            <person name="Futaki S."/>
            <person name="Gariboldi M."/>
            <person name="Georgii-Hemming P."/>
            <person name="Gingeras T.R."/>
            <person name="Gojobori T."/>
            <person name="Green R.E."/>
            <person name="Gustincich S."/>
            <person name="Harbers M."/>
            <person name="Hayashi Y."/>
            <person name="Hensch T.K."/>
            <person name="Hirokawa N."/>
            <person name="Hill D."/>
            <person name="Huminiecki L."/>
            <person name="Iacono M."/>
            <person name="Ikeo K."/>
            <person name="Iwama A."/>
            <person name="Ishikawa T."/>
            <person name="Jakt M."/>
            <person name="Kanapin A."/>
            <person name="Katoh M."/>
            <person name="Kawasawa Y."/>
            <person name="Kelso J."/>
            <person name="Kitamura H."/>
            <person name="Kitano H."/>
            <person name="Kollias G."/>
            <person name="Krishnan S.P."/>
            <person name="Kruger A."/>
            <person name="Kummerfeld S.K."/>
            <person name="Kurochkin I.V."/>
            <person name="Lareau L.F."/>
            <person name="Lazarevic D."/>
            <person name="Lipovich L."/>
            <person name="Liu J."/>
            <person name="Liuni S."/>
            <person name="McWilliam S."/>
            <person name="Madan Babu M."/>
            <person name="Madera M."/>
            <person name="Marchionni L."/>
            <person name="Matsuda H."/>
            <person name="Matsuzawa S."/>
            <person name="Miki H."/>
            <person name="Mignone F."/>
            <person name="Miyake S."/>
            <person name="Morris K."/>
            <person name="Mottagui-Tabar S."/>
            <person name="Mulder N."/>
            <person name="Nakano N."/>
            <person name="Nakauchi H."/>
            <person name="Ng P."/>
            <person name="Nilsson R."/>
            <person name="Nishiguchi S."/>
            <person name="Nishikawa S."/>
            <person name="Nori F."/>
            <person name="Ohara O."/>
            <person name="Okazaki Y."/>
            <person name="Orlando V."/>
            <person name="Pang K.C."/>
            <person name="Pavan W.J."/>
            <person name="Pavesi G."/>
            <person name="Pesole G."/>
            <person name="Petrovsky N."/>
            <person name="Piazza S."/>
            <person name="Reed J."/>
            <person name="Reid J.F."/>
            <person name="Ring B.Z."/>
            <person name="Ringwald M."/>
            <person name="Rost B."/>
            <person name="Ruan Y."/>
            <person name="Salzberg S.L."/>
            <person name="Sandelin A."/>
            <person name="Schneider C."/>
            <person name="Schoenbach C."/>
            <person name="Sekiguchi K."/>
            <person name="Semple C.A."/>
            <person name="Seno S."/>
            <person name="Sessa L."/>
            <person name="Sheng Y."/>
            <person name="Shibata Y."/>
            <person name="Shimada H."/>
            <person name="Shimada K."/>
            <person name="Silva D."/>
            <person name="Sinclair B."/>
            <person name="Sperling S."/>
            <person name="Stupka E."/>
            <person name="Sugiura K."/>
            <person name="Sultana R."/>
            <person name="Takenaka Y."/>
            <person name="Taki K."/>
            <person name="Tammoja K."/>
            <person name="Tan S.L."/>
            <person name="Tang S."/>
            <person name="Taylor M.S."/>
            <person name="Tegner J."/>
            <person name="Teichmann S.A."/>
            <person name="Ueda H.R."/>
            <person name="van Nimwegen E."/>
            <person name="Verardo R."/>
            <person name="Wei C.L."/>
            <person name="Yagi K."/>
            <person name="Yamanishi H."/>
            <person name="Zabarovsky E."/>
            <person name="Zhu S."/>
            <person name="Zimmer A."/>
            <person name="Hide W."/>
            <person name="Bult C."/>
            <person name="Grimmond S.M."/>
            <person name="Teasdale R.D."/>
            <person name="Liu E.T."/>
            <person name="Brusic V."/>
            <person name="Quackenbush J."/>
            <person name="Wahlestedt C."/>
            <person name="Mattick J.S."/>
            <person name="Hume D.A."/>
            <person name="Kai C."/>
            <person name="Sasaki D."/>
            <person name="Tomaru Y."/>
            <person name="Fukuda S."/>
            <person name="Kanamori-Katayama M."/>
            <person name="Suzuki M."/>
            <person name="Aoki J."/>
            <person name="Arakawa T."/>
            <person name="Iida J."/>
            <person name="Imamura K."/>
            <person name="Itoh M."/>
            <person name="Kato T."/>
            <person name="Kawaji H."/>
            <person name="Kawagashira N."/>
            <person name="Kawashima T."/>
            <person name="Kojima M."/>
            <person name="Kondo S."/>
            <person name="Konno H."/>
            <person name="Nakano K."/>
            <person name="Ninomiya N."/>
            <person name="Nishio T."/>
            <person name="Okada M."/>
            <person name="Plessy C."/>
            <person name="Shibata K."/>
            <person name="Shiraki T."/>
            <person name="Suzuki S."/>
            <person name="Tagami M."/>
            <person name="Waki K."/>
            <person name="Watahiki A."/>
            <person name="Okamura-Oho Y."/>
            <person name="Suzuki H."/>
            <person name="Kawai J."/>
            <person name="Hayashizaki Y."/>
        </authorList>
    </citation>
    <scope>NUCLEOTIDE SEQUENCE [LARGE SCALE MRNA]</scope>
    <source>
        <strain>C57BL/6J</strain>
        <strain>NOD</strain>
        <tissue>Thymus</tissue>
    </source>
</reference>
<reference key="4">
    <citation type="journal article" date="2004" name="Genome Res.">
        <title>The status, quality, and expansion of the NIH full-length cDNA project: the Mammalian Gene Collection (MGC).</title>
        <authorList>
            <consortium name="The MGC Project Team"/>
        </authorList>
    </citation>
    <scope>NUCLEOTIDE SEQUENCE [LARGE SCALE MRNA]</scope>
    <source>
        <strain>FVB/N</strain>
        <tissue>Mammary tumor</tissue>
    </source>
</reference>
<reference key="5">
    <citation type="journal article" date="1993" name="J. Biol. Chem.">
        <title>Enzymatic characterization of the individual mammalian primase subunits reveals a biphasic mechanism for initiation of DNA replication.</title>
        <authorList>
            <person name="Copeland W.C."/>
            <person name="Wang T.S."/>
        </authorList>
    </citation>
    <scope>FUNCTION</scope>
    <scope>INTERACTION WITH POLA1 AND PRIM1</scope>
    <scope>IDENTIFICATION IN DNA PRIMASE COMPLEX</scope>
</reference>
<reference key="6">
    <citation type="journal article" date="2010" name="Cell">
        <title>A tissue-specific atlas of mouse protein phosphorylation and expression.</title>
        <authorList>
            <person name="Huttlin E.L."/>
            <person name="Jedrychowski M.P."/>
            <person name="Elias J.E."/>
            <person name="Goswami T."/>
            <person name="Rad R."/>
            <person name="Beausoleil S.A."/>
            <person name="Villen J."/>
            <person name="Haas W."/>
            <person name="Sowa M.E."/>
            <person name="Gygi S.P."/>
        </authorList>
    </citation>
    <scope>IDENTIFICATION BY MASS SPECTROMETRY [LARGE SCALE ANALYSIS]</scope>
    <source>
        <tissue>Spleen</tissue>
        <tissue>Testis</tissue>
    </source>
</reference>
<protein>
    <recommendedName>
        <fullName>DNA primase large subunit</fullName>
    </recommendedName>
    <alternativeName>
        <fullName>DNA primase 58 kDa subunit</fullName>
        <shortName>p58</shortName>
    </alternativeName>
</protein>